<keyword id="KW-1185">Reference proteome</keyword>
<keyword id="KW-0687">Ribonucleoprotein</keyword>
<keyword id="KW-0689">Ribosomal protein</keyword>
<dbReference type="EMBL" id="CP000360">
    <property type="protein sequence ID" value="ABF39024.1"/>
    <property type="molecule type" value="Genomic_DNA"/>
</dbReference>
<dbReference type="RefSeq" id="WP_011520826.1">
    <property type="nucleotide sequence ID" value="NC_008009.1"/>
</dbReference>
<dbReference type="SMR" id="Q1IVS6"/>
<dbReference type="STRING" id="204669.Acid345_0019"/>
<dbReference type="EnsemblBacteria" id="ABF39024">
    <property type="protein sequence ID" value="ABF39024"/>
    <property type="gene ID" value="Acid345_0019"/>
</dbReference>
<dbReference type="KEGG" id="aba:Acid345_0019"/>
<dbReference type="eggNOG" id="COG0211">
    <property type="taxonomic scope" value="Bacteria"/>
</dbReference>
<dbReference type="HOGENOM" id="CLU_095424_4_0_0"/>
<dbReference type="OrthoDB" id="9803474at2"/>
<dbReference type="Proteomes" id="UP000002432">
    <property type="component" value="Chromosome"/>
</dbReference>
<dbReference type="GO" id="GO:0022625">
    <property type="term" value="C:cytosolic large ribosomal subunit"/>
    <property type="evidence" value="ECO:0007669"/>
    <property type="project" value="TreeGrafter"/>
</dbReference>
<dbReference type="GO" id="GO:0003735">
    <property type="term" value="F:structural constituent of ribosome"/>
    <property type="evidence" value="ECO:0007669"/>
    <property type="project" value="InterPro"/>
</dbReference>
<dbReference type="GO" id="GO:0006412">
    <property type="term" value="P:translation"/>
    <property type="evidence" value="ECO:0007669"/>
    <property type="project" value="UniProtKB-UniRule"/>
</dbReference>
<dbReference type="FunFam" id="2.40.50.100:FF:000020">
    <property type="entry name" value="50S ribosomal protein L27"/>
    <property type="match status" value="1"/>
</dbReference>
<dbReference type="Gene3D" id="2.40.50.100">
    <property type="match status" value="1"/>
</dbReference>
<dbReference type="HAMAP" id="MF_00539">
    <property type="entry name" value="Ribosomal_bL27"/>
    <property type="match status" value="1"/>
</dbReference>
<dbReference type="InterPro" id="IPR001684">
    <property type="entry name" value="Ribosomal_bL27"/>
</dbReference>
<dbReference type="InterPro" id="IPR018261">
    <property type="entry name" value="Ribosomal_bL27_CS"/>
</dbReference>
<dbReference type="NCBIfam" id="TIGR00062">
    <property type="entry name" value="L27"/>
    <property type="match status" value="1"/>
</dbReference>
<dbReference type="PANTHER" id="PTHR15893:SF0">
    <property type="entry name" value="LARGE RIBOSOMAL SUBUNIT PROTEIN BL27M"/>
    <property type="match status" value="1"/>
</dbReference>
<dbReference type="PANTHER" id="PTHR15893">
    <property type="entry name" value="RIBOSOMAL PROTEIN L27"/>
    <property type="match status" value="1"/>
</dbReference>
<dbReference type="Pfam" id="PF01016">
    <property type="entry name" value="Ribosomal_L27"/>
    <property type="match status" value="1"/>
</dbReference>
<dbReference type="PRINTS" id="PR00063">
    <property type="entry name" value="RIBOSOMALL27"/>
</dbReference>
<dbReference type="SUPFAM" id="SSF110324">
    <property type="entry name" value="Ribosomal L27 protein-like"/>
    <property type="match status" value="1"/>
</dbReference>
<dbReference type="PROSITE" id="PS00831">
    <property type="entry name" value="RIBOSOMAL_L27"/>
    <property type="match status" value="1"/>
</dbReference>
<evidence type="ECO:0000255" key="1">
    <source>
        <dbReference type="HAMAP-Rule" id="MF_00539"/>
    </source>
</evidence>
<evidence type="ECO:0000305" key="2"/>
<comment type="similarity">
    <text evidence="1">Belongs to the bacterial ribosomal protein bL27 family.</text>
</comment>
<organism>
    <name type="scientific">Koribacter versatilis (strain Ellin345)</name>
    <dbReference type="NCBI Taxonomy" id="204669"/>
    <lineage>
        <taxon>Bacteria</taxon>
        <taxon>Pseudomonadati</taxon>
        <taxon>Acidobacteriota</taxon>
        <taxon>Terriglobia</taxon>
        <taxon>Terriglobales</taxon>
        <taxon>Candidatus Korobacteraceae</taxon>
        <taxon>Candidatus Korobacter</taxon>
    </lineage>
</organism>
<reference key="1">
    <citation type="journal article" date="2009" name="Appl. Environ. Microbiol.">
        <title>Three genomes from the phylum Acidobacteria provide insight into the lifestyles of these microorganisms in soils.</title>
        <authorList>
            <person name="Ward N.L."/>
            <person name="Challacombe J.F."/>
            <person name="Janssen P.H."/>
            <person name="Henrissat B."/>
            <person name="Coutinho P.M."/>
            <person name="Wu M."/>
            <person name="Xie G."/>
            <person name="Haft D.H."/>
            <person name="Sait M."/>
            <person name="Badger J."/>
            <person name="Barabote R.D."/>
            <person name="Bradley B."/>
            <person name="Brettin T.S."/>
            <person name="Brinkac L.M."/>
            <person name="Bruce D."/>
            <person name="Creasy T."/>
            <person name="Daugherty S.C."/>
            <person name="Davidsen T.M."/>
            <person name="DeBoy R.T."/>
            <person name="Detter J.C."/>
            <person name="Dodson R.J."/>
            <person name="Durkin A.S."/>
            <person name="Ganapathy A."/>
            <person name="Gwinn-Giglio M."/>
            <person name="Han C.S."/>
            <person name="Khouri H."/>
            <person name="Kiss H."/>
            <person name="Kothari S.P."/>
            <person name="Madupu R."/>
            <person name="Nelson K.E."/>
            <person name="Nelson W.C."/>
            <person name="Paulsen I."/>
            <person name="Penn K."/>
            <person name="Ren Q."/>
            <person name="Rosovitz M.J."/>
            <person name="Selengut J.D."/>
            <person name="Shrivastava S."/>
            <person name="Sullivan S.A."/>
            <person name="Tapia R."/>
            <person name="Thompson L.S."/>
            <person name="Watkins K.L."/>
            <person name="Yang Q."/>
            <person name="Yu C."/>
            <person name="Zafar N."/>
            <person name="Zhou L."/>
            <person name="Kuske C.R."/>
        </authorList>
    </citation>
    <scope>NUCLEOTIDE SEQUENCE [LARGE SCALE GENOMIC DNA]</scope>
    <source>
        <strain>Ellin345</strain>
    </source>
</reference>
<sequence>MAHKKGLGSSRNGRDSNAQRLGVKAFGGETVTGGTIIVRQRGTRIKPGLNVGRGKDDTLFAKADGRVEFKDRGNLGRFVSIVPAKA</sequence>
<feature type="chain" id="PRO_1000017393" description="Large ribosomal subunit protein bL27">
    <location>
        <begin position="1"/>
        <end position="86"/>
    </location>
</feature>
<proteinExistence type="inferred from homology"/>
<gene>
    <name evidence="1" type="primary">rpmA</name>
    <name type="ordered locus">Acid345_0019</name>
</gene>
<accession>Q1IVS6</accession>
<name>RL27_KORVE</name>
<protein>
    <recommendedName>
        <fullName evidence="1">Large ribosomal subunit protein bL27</fullName>
    </recommendedName>
    <alternativeName>
        <fullName evidence="2">50S ribosomal protein L27</fullName>
    </alternativeName>
</protein>